<sequence length="88" mass="8514">MASLGSSAGGRRPTVLLQIALFVVVAAIIINSSVCLGATAVHDAAASGTGALDPNVPAVPTPGGAGQPYTGRGCRTVYGCRPPAGGQP</sequence>
<accession>Q01482</accession>
<protein>
    <recommendedName>
        <fullName>Protein WIR1A</fullName>
    </recommendedName>
</protein>
<feature type="chain" id="PRO_0000065973" description="Protein WIR1A">
    <location>
        <begin position="1"/>
        <end position="88"/>
    </location>
</feature>
<feature type="topological domain" description="Cytoplasmic" evidence="1">
    <location>
        <begin position="1"/>
        <end position="13"/>
    </location>
</feature>
<feature type="transmembrane region" description="Helical" evidence="1">
    <location>
        <begin position="14"/>
        <end position="35"/>
    </location>
</feature>
<feature type="topological domain" description="Extracellular" evidence="1">
    <location>
        <begin position="36"/>
        <end position="88"/>
    </location>
</feature>
<keyword id="KW-0472">Membrane</keyword>
<keyword id="KW-1185">Reference proteome</keyword>
<keyword id="KW-0812">Transmembrane</keyword>
<keyword id="KW-1133">Transmembrane helix</keyword>
<comment type="function">
    <text>Associated with pathogen defense.</text>
</comment>
<comment type="subcellular location">
    <subcellularLocation>
        <location evidence="2">Membrane</location>
        <topology evidence="2">Single-pass type II membrane protein</topology>
    </subcellularLocation>
</comment>
<evidence type="ECO:0000255" key="1"/>
<evidence type="ECO:0000305" key="2"/>
<proteinExistence type="predicted"/>
<dbReference type="EMBL" id="M95500">
    <property type="protein sequence ID" value="AAA34311.1"/>
    <property type="molecule type" value="Genomic_DNA"/>
</dbReference>
<dbReference type="PIR" id="T06988">
    <property type="entry name" value="T06988"/>
</dbReference>
<dbReference type="EnsemblPlants" id="TraesARI5B03G02850490.1">
    <property type="protein sequence ID" value="TraesARI5B03G02850490.1"/>
    <property type="gene ID" value="TraesARI5B03G02850490"/>
</dbReference>
<dbReference type="EnsemblPlants" id="TraesCAD_scaffold_050164_01G000300.1">
    <property type="protein sequence ID" value="TraesCAD_scaffold_050164_01G000300.1"/>
    <property type="gene ID" value="TraesCAD_scaffold_050164_01G000300"/>
</dbReference>
<dbReference type="EnsemblPlants" id="TraesCLE_scaffold_002274_01G000800.1">
    <property type="protein sequence ID" value="TraesCLE_scaffold_002274_01G000800.1"/>
    <property type="gene ID" value="TraesCLE_scaffold_002274_01G000800"/>
</dbReference>
<dbReference type="EnsemblPlants" id="TraesCS5B02G045100.1">
    <property type="protein sequence ID" value="TraesCS5B02G045100.1"/>
    <property type="gene ID" value="TraesCS5B02G045100"/>
</dbReference>
<dbReference type="EnsemblPlants" id="TraesCS5B03G0117800.1">
    <property type="protein sequence ID" value="TraesCS5B03G0117800.1.CDS"/>
    <property type="gene ID" value="TraesCS5B03G0117800"/>
</dbReference>
<dbReference type="EnsemblPlants" id="TraesJAG5B03G02808660.1">
    <property type="protein sequence ID" value="TraesJAG5B03G02808660.1"/>
    <property type="gene ID" value="TraesJAG5B03G02808660"/>
</dbReference>
<dbReference type="EnsemblPlants" id="TraesJUL5B03G02828680.1">
    <property type="protein sequence ID" value="TraesJUL5B03G02828680.1"/>
    <property type="gene ID" value="TraesJUL5B03G02828680"/>
</dbReference>
<dbReference type="EnsemblPlants" id="TraesKAR5B01G0035610.1">
    <property type="protein sequence ID" value="cds.TraesKAR5B01G0035610.1"/>
    <property type="gene ID" value="TraesKAR5B01G0035610"/>
</dbReference>
<dbReference type="EnsemblPlants" id="TraesLAC5B03G02762850.1">
    <property type="protein sequence ID" value="TraesLAC5B03G02762850.1"/>
    <property type="gene ID" value="TraesLAC5B03G02762850"/>
</dbReference>
<dbReference type="EnsemblPlants" id="TraesLDM5B03G02810510.1">
    <property type="protein sequence ID" value="TraesLDM5B03G02810510.1"/>
    <property type="gene ID" value="TraesLDM5B03G02810510"/>
</dbReference>
<dbReference type="EnsemblPlants" id="TraesMAC5B03G02807290.1">
    <property type="protein sequence ID" value="TraesMAC5B03G02807290.1"/>
    <property type="gene ID" value="TraesMAC5B03G02807290"/>
</dbReference>
<dbReference type="EnsemblPlants" id="TraesNOR5B03G02833050.1">
    <property type="protein sequence ID" value="TraesNOR5B03G02833050.1"/>
    <property type="gene ID" value="TraesNOR5B03G02833050"/>
</dbReference>
<dbReference type="EnsemblPlants" id="TraesPARA_EIv1.0_1638930.1">
    <property type="protein sequence ID" value="TraesPARA_EIv1.0_1638930.1.CDS"/>
    <property type="gene ID" value="TraesPARA_EIv1.0_1638930"/>
</dbReference>
<dbReference type="EnsemblPlants" id="TraesRN5B0100120200.1">
    <property type="protein sequence ID" value="TraesRN5B0100120200.1"/>
    <property type="gene ID" value="TraesRN5B0100120200"/>
</dbReference>
<dbReference type="EnsemblPlants" id="TraesROB_scaffold_001128_01G000800.1">
    <property type="protein sequence ID" value="TraesROB_scaffold_001128_01G000800.1"/>
    <property type="gene ID" value="TraesROB_scaffold_001128_01G000800"/>
</dbReference>
<dbReference type="EnsemblPlants" id="TraesSTA5B03G02800130.1">
    <property type="protein sequence ID" value="TraesSTA5B03G02800130.1"/>
    <property type="gene ID" value="TraesSTA5B03G02800130"/>
</dbReference>
<dbReference type="EnsemblPlants" id="TraesSYM5B03G02837120.1">
    <property type="protein sequence ID" value="TraesSYM5B03G02837120.1"/>
    <property type="gene ID" value="TraesSYM5B03G02837120"/>
</dbReference>
<dbReference type="EnsemblPlants" id="TraesWEE_scaffold_014375_01G000300.1">
    <property type="protein sequence ID" value="TraesWEE_scaffold_014375_01G000300.1"/>
    <property type="gene ID" value="TraesWEE_scaffold_014375_01G000300"/>
</dbReference>
<dbReference type="Gramene" id="TraesARI5B03G02850490.1">
    <property type="protein sequence ID" value="TraesARI5B03G02850490.1"/>
    <property type="gene ID" value="TraesARI5B03G02850490"/>
</dbReference>
<dbReference type="Gramene" id="TraesCAD_scaffold_050164_01G000300.1">
    <property type="protein sequence ID" value="TraesCAD_scaffold_050164_01G000300.1"/>
    <property type="gene ID" value="TraesCAD_scaffold_050164_01G000300"/>
</dbReference>
<dbReference type="Gramene" id="TraesCLE_scaffold_002274_01G000800.1">
    <property type="protein sequence ID" value="TraesCLE_scaffold_002274_01G000800.1"/>
    <property type="gene ID" value="TraesCLE_scaffold_002274_01G000800"/>
</dbReference>
<dbReference type="Gramene" id="TraesCS5B02G045100.1">
    <property type="protein sequence ID" value="TraesCS5B02G045100.1"/>
    <property type="gene ID" value="TraesCS5B02G045100"/>
</dbReference>
<dbReference type="Gramene" id="TraesCS5B03G0117800.1">
    <property type="protein sequence ID" value="TraesCS5B03G0117800.1.CDS"/>
    <property type="gene ID" value="TraesCS5B03G0117800"/>
</dbReference>
<dbReference type="Gramene" id="TraesJAG5B03G02808660.1">
    <property type="protein sequence ID" value="TraesJAG5B03G02808660.1"/>
    <property type="gene ID" value="TraesJAG5B03G02808660"/>
</dbReference>
<dbReference type="Gramene" id="TraesJUL5B03G02828680.1">
    <property type="protein sequence ID" value="TraesJUL5B03G02828680.1"/>
    <property type="gene ID" value="TraesJUL5B03G02828680"/>
</dbReference>
<dbReference type="Gramene" id="TraesKAR5B01G0035610.1">
    <property type="protein sequence ID" value="cds.TraesKAR5B01G0035610.1"/>
    <property type="gene ID" value="TraesKAR5B01G0035610"/>
</dbReference>
<dbReference type="Gramene" id="TraesLAC5B03G02762850.1">
    <property type="protein sequence ID" value="TraesLAC5B03G02762850.1"/>
    <property type="gene ID" value="TraesLAC5B03G02762850"/>
</dbReference>
<dbReference type="Gramene" id="TraesLDM5B03G02810510.1">
    <property type="protein sequence ID" value="TraesLDM5B03G02810510.1"/>
    <property type="gene ID" value="TraesLDM5B03G02810510"/>
</dbReference>
<dbReference type="Gramene" id="TraesMAC5B03G02807290.1">
    <property type="protein sequence ID" value="TraesMAC5B03G02807290.1"/>
    <property type="gene ID" value="TraesMAC5B03G02807290"/>
</dbReference>
<dbReference type="Gramene" id="TraesNOR5B03G02833050.1">
    <property type="protein sequence ID" value="TraesNOR5B03G02833050.1"/>
    <property type="gene ID" value="TraesNOR5B03G02833050"/>
</dbReference>
<dbReference type="Gramene" id="TraesPARA_EIv1.0_1638930.1">
    <property type="protein sequence ID" value="TraesPARA_EIv1.0_1638930.1.CDS"/>
    <property type="gene ID" value="TraesPARA_EIv1.0_1638930"/>
</dbReference>
<dbReference type="Gramene" id="TraesRN5B0100120200.1">
    <property type="protein sequence ID" value="TraesRN5B0100120200.1"/>
    <property type="gene ID" value="TraesRN5B0100120200"/>
</dbReference>
<dbReference type="Gramene" id="TraesROB_scaffold_001128_01G000800.1">
    <property type="protein sequence ID" value="TraesROB_scaffold_001128_01G000800.1"/>
    <property type="gene ID" value="TraesROB_scaffold_001128_01G000800"/>
</dbReference>
<dbReference type="Gramene" id="TraesSTA5B03G02800130.1">
    <property type="protein sequence ID" value="TraesSTA5B03G02800130.1"/>
    <property type="gene ID" value="TraesSTA5B03G02800130"/>
</dbReference>
<dbReference type="Gramene" id="TraesSYM5B03G02837120.1">
    <property type="protein sequence ID" value="TraesSYM5B03G02837120.1"/>
    <property type="gene ID" value="TraesSYM5B03G02837120"/>
</dbReference>
<dbReference type="Gramene" id="TraesWEE_scaffold_014375_01G000300.1">
    <property type="protein sequence ID" value="TraesWEE_scaffold_014375_01G000300.1"/>
    <property type="gene ID" value="TraesWEE_scaffold_014375_01G000300"/>
</dbReference>
<dbReference type="OrthoDB" id="654007at2759"/>
<dbReference type="Proteomes" id="UP000019116">
    <property type="component" value="Chromosome 5B"/>
</dbReference>
<dbReference type="ExpressionAtlas" id="Q01482">
    <property type="expression patterns" value="baseline and differential"/>
</dbReference>
<dbReference type="GO" id="GO:0016020">
    <property type="term" value="C:membrane"/>
    <property type="evidence" value="ECO:0007669"/>
    <property type="project" value="UniProtKB-SubCell"/>
</dbReference>
<name>WIR1A_WHEAT</name>
<organism>
    <name type="scientific">Triticum aestivum</name>
    <name type="common">Wheat</name>
    <dbReference type="NCBI Taxonomy" id="4565"/>
    <lineage>
        <taxon>Eukaryota</taxon>
        <taxon>Viridiplantae</taxon>
        <taxon>Streptophyta</taxon>
        <taxon>Embryophyta</taxon>
        <taxon>Tracheophyta</taxon>
        <taxon>Spermatophyta</taxon>
        <taxon>Magnoliopsida</taxon>
        <taxon>Liliopsida</taxon>
        <taxon>Poales</taxon>
        <taxon>Poaceae</taxon>
        <taxon>BOP clade</taxon>
        <taxon>Pooideae</taxon>
        <taxon>Triticodae</taxon>
        <taxon>Triticeae</taxon>
        <taxon>Triticinae</taxon>
        <taxon>Triticum</taxon>
    </lineage>
</organism>
<reference key="1">
    <citation type="journal article" date="1992" name="Mol. Plant Microbe Interact.">
        <title>Sequence and expression of a wheat gene that encodes a novel protein associated with pathogen defense.</title>
        <authorList>
            <person name="Bull J."/>
            <person name="Mauch F."/>
            <person name="Hertig C."/>
            <person name="Rebmann G."/>
            <person name="Dudler R."/>
        </authorList>
    </citation>
    <scope>NUCLEOTIDE SEQUENCE [GENOMIC DNA]</scope>
    <source>
        <tissue>Leaf</tissue>
    </source>
</reference>
<gene>
    <name type="primary">WIR1A</name>
</gene>